<protein>
    <recommendedName>
        <fullName evidence="9">Acyl-CoA Delta-9 desaturase</fullName>
        <shortName evidence="10">AdD9Des</shortName>
        <ecNumber evidence="6 7 8">1.14.19.1</ecNumber>
    </recommendedName>
    <alternativeName>
        <fullName evidence="15">Delta-9 desaturase 1</fullName>
        <shortName evidence="9">Cricd9des1</shortName>
    </alternativeName>
    <alternativeName>
        <fullName evidence="16">Delta-9 desaturase 3</fullName>
        <shortName evidence="9">Cricd9des3</shortName>
    </alternativeName>
</protein>
<feature type="chain" id="PRO_0000452363" description="Acyl-CoA Delta-9 desaturase">
    <location>
        <begin position="1"/>
        <end position="359"/>
    </location>
</feature>
<feature type="transmembrane region" description="Helical" evidence="4">
    <location>
        <begin position="51"/>
        <end position="71"/>
    </location>
</feature>
<feature type="transmembrane region" description="Helical" evidence="4">
    <location>
        <begin position="74"/>
        <end position="94"/>
    </location>
</feature>
<feature type="transmembrane region" description="Helical" evidence="4">
    <location>
        <begin position="194"/>
        <end position="214"/>
    </location>
</feature>
<feature type="transmembrane region" description="Helical" evidence="4">
    <location>
        <begin position="222"/>
        <end position="244"/>
    </location>
</feature>
<feature type="short sequence motif" description="Histidine box-1" evidence="3">
    <location>
        <begin position="96"/>
        <end position="101"/>
    </location>
</feature>
<feature type="short sequence motif" description="Histidine box-2" evidence="3">
    <location>
        <begin position="133"/>
        <end position="137"/>
    </location>
</feature>
<feature type="short sequence motif" description="Histidine box-3" evidence="3">
    <location>
        <begin position="274"/>
        <end position="278"/>
    </location>
</feature>
<feature type="binding site" evidence="2">
    <location>
        <position position="96"/>
    </location>
    <ligand>
        <name>Fe cation</name>
        <dbReference type="ChEBI" id="CHEBI:24875"/>
        <label>1</label>
    </ligand>
</feature>
<feature type="binding site" evidence="2">
    <location>
        <position position="101"/>
    </location>
    <ligand>
        <name>Fe cation</name>
        <dbReference type="ChEBI" id="CHEBI:24875"/>
        <label>1</label>
    </ligand>
</feature>
<feature type="binding site" evidence="2">
    <location>
        <position position="133"/>
    </location>
    <ligand>
        <name>Fe cation</name>
        <dbReference type="ChEBI" id="CHEBI:24875"/>
        <label>1</label>
    </ligand>
</feature>
<feature type="binding site" evidence="2">
    <location>
        <position position="136"/>
    </location>
    <ligand>
        <name>Fe cation</name>
        <dbReference type="ChEBI" id="CHEBI:24875"/>
        <label>2</label>
    </ligand>
</feature>
<feature type="binding site" evidence="2">
    <location>
        <position position="137"/>
    </location>
    <ligand>
        <name>Fe cation</name>
        <dbReference type="ChEBI" id="CHEBI:24875"/>
        <label>1</label>
    </ligand>
</feature>
<feature type="binding site" evidence="2">
    <location>
        <position position="245"/>
    </location>
    <ligand>
        <name>Fe cation</name>
        <dbReference type="ChEBI" id="CHEBI:24875"/>
        <label>2</label>
    </ligand>
</feature>
<feature type="binding site" evidence="2">
    <location>
        <position position="274"/>
    </location>
    <ligand>
        <name>Fe cation</name>
        <dbReference type="ChEBI" id="CHEBI:24875"/>
        <label>2</label>
    </ligand>
</feature>
<feature type="binding site" evidence="2">
    <location>
        <position position="277"/>
    </location>
    <ligand>
        <name>Fe cation</name>
        <dbReference type="ChEBI" id="CHEBI:24875"/>
        <label>1</label>
    </ligand>
</feature>
<feature type="binding site" evidence="2">
    <location>
        <position position="278"/>
    </location>
    <ligand>
        <name>Fe cation</name>
        <dbReference type="ChEBI" id="CHEBI:24875"/>
        <label>2</label>
    </ligand>
</feature>
<proteinExistence type="evidence at protein level"/>
<keyword id="KW-0275">Fatty acid biosynthesis</keyword>
<keyword id="KW-0276">Fatty acid metabolism</keyword>
<keyword id="KW-0408">Iron</keyword>
<keyword id="KW-0444">Lipid biosynthesis</keyword>
<keyword id="KW-0443">Lipid metabolism</keyword>
<keyword id="KW-0472">Membrane</keyword>
<keyword id="KW-0479">Metal-binding</keyword>
<keyword id="KW-0560">Oxidoreductase</keyword>
<keyword id="KW-0812">Transmembrane</keyword>
<keyword id="KW-1133">Transmembrane helix</keyword>
<sequence>MAPNITSAPTGVLFEGDTIGPAAKDQQAEVNAPEAKKPREPYRRQIVWRNVILFIYLHLAALYGAYLAFTSAKIATTIFAIILYQVSGVGITGGAHRLWAHRSYKAKWPLRVILMLCNTLAFQNHIYEWARDHRVHHKFSETDADPHNATRGFFFSHVGWLLVRKHPDVKEKGKGIDMHDLEQDKIVMFQKKYYLILMPIVCFLIPTTIPVYMWNETWSNAWFVATLFRYTFTLNMTWLVNSAAHMWGSQPYDKYINPAENLGVALGAMGEGWHNYHHVFPWDYKAAELGNYRANFTTAFIDFFARIGWAYDLKTVPVSMIQRRVERTGDGSHEVWGWGDKDMPQEDIDGAVIEKRKTQ</sequence>
<reference key="1">
    <citation type="journal article" date="2002" name="Insect Biochem. Mol. Biol.">
        <title>Biochemical and molecular characterizaton of house cricket (Acheta domesticus, Orthoptera: Gryllidae) Delta9 desaturase.</title>
        <authorList>
            <person name="Riddervold M.H."/>
            <person name="Tittiger C."/>
            <person name="Blomquist G.J."/>
            <person name="Borgeson C.E."/>
        </authorList>
    </citation>
    <scope>NUCLEOTIDE SEQUENCE [MRNA]</scope>
    <scope>FUNCTION</scope>
    <scope>CATALYTIC ACTIVITY</scope>
</reference>
<reference key="2">
    <citation type="journal article" date="2008" name="Insect Mol. Biol.">
        <title>Isolation and functional characterization of two independently-evolved fatty acid Delta12-desaturase genes from insects.</title>
        <authorList>
            <person name="Zhou X.-R."/>
            <person name="Horne I."/>
            <person name="Damcevski K."/>
            <person name="Haritos V."/>
            <person name="Green A."/>
            <person name="Singh S."/>
        </authorList>
    </citation>
    <scope>CATALYTIC ACTIVITY</scope>
</reference>
<reference key="3">
    <citation type="journal article" date="2011" name="J. Biol. Chem.">
        <title>Mechanistic and structural insights into the regioselectivity of an acyl-CoA fatty acid desaturase via directed molecular evolution.</title>
        <authorList>
            <person name="Vanhercke T."/>
            <person name="Shrestha P."/>
            <person name="Green A.G."/>
            <person name="Singh S.P."/>
        </authorList>
    </citation>
    <scope>CATALYTIC ACTIVITY</scope>
</reference>
<comment type="function">
    <text evidence="6 7 8">Catalyzes the formation of a Delta9 double bond, acting on saturated fatty acyl substrates like palmitoyl-CoA (hexadecanoyl-CoA) and stearoyl-CoA (octadecanoyl-CoA) with higher desaturation activity on octadecanoyl-CoA than hexadecanoyl-CoA.</text>
</comment>
<comment type="catalytic activity">
    <reaction evidence="6 7 8">
        <text>octadecanoyl-CoA + 2 Fe(II)-[cytochrome b5] + O2 + 2 H(+) = (9Z)-octadecenoyl-CoA + 2 Fe(III)-[cytochrome b5] + 2 H2O</text>
        <dbReference type="Rhea" id="RHEA:19721"/>
        <dbReference type="Rhea" id="RHEA-COMP:10438"/>
        <dbReference type="Rhea" id="RHEA-COMP:10439"/>
        <dbReference type="ChEBI" id="CHEBI:15377"/>
        <dbReference type="ChEBI" id="CHEBI:15378"/>
        <dbReference type="ChEBI" id="CHEBI:15379"/>
        <dbReference type="ChEBI" id="CHEBI:29033"/>
        <dbReference type="ChEBI" id="CHEBI:29034"/>
        <dbReference type="ChEBI" id="CHEBI:57387"/>
        <dbReference type="ChEBI" id="CHEBI:57394"/>
        <dbReference type="EC" id="1.14.19.1"/>
    </reaction>
    <physiologicalReaction direction="left-to-right" evidence="12 13 14">
        <dbReference type="Rhea" id="RHEA:19722"/>
    </physiologicalReaction>
</comment>
<comment type="catalytic activity">
    <reaction evidence="6 7 8">
        <text>hexadecanoyl-CoA + 2 Fe(II)-[cytochrome b5] + O2 + 2 H(+) = (9Z)-hexadecenoyl-CoA + 2 Fe(III)-[cytochrome b5] + 2 H2O</text>
        <dbReference type="Rhea" id="RHEA:36931"/>
        <dbReference type="Rhea" id="RHEA-COMP:10438"/>
        <dbReference type="Rhea" id="RHEA-COMP:10439"/>
        <dbReference type="ChEBI" id="CHEBI:15377"/>
        <dbReference type="ChEBI" id="CHEBI:15378"/>
        <dbReference type="ChEBI" id="CHEBI:15379"/>
        <dbReference type="ChEBI" id="CHEBI:29033"/>
        <dbReference type="ChEBI" id="CHEBI:29034"/>
        <dbReference type="ChEBI" id="CHEBI:57379"/>
        <dbReference type="ChEBI" id="CHEBI:61540"/>
    </reaction>
    <physiologicalReaction direction="left-to-right" evidence="12 13 14">
        <dbReference type="Rhea" id="RHEA:36932"/>
    </physiologicalReaction>
</comment>
<comment type="cofactor">
    <cofactor evidence="1">
        <name>Fe(2+)</name>
        <dbReference type="ChEBI" id="CHEBI:29033"/>
    </cofactor>
    <text evidence="1">Expected to bind 2 Fe(2+) ions per subunit.</text>
</comment>
<comment type="subcellular location">
    <subcellularLocation>
        <location evidence="4">Membrane</location>
        <topology evidence="4">Multi-pass membrane protein</topology>
    </subcellularLocation>
</comment>
<comment type="domain">
    <text evidence="5">The histidine box domains may contain the active site and/or be involved in metal ion binding.</text>
</comment>
<comment type="similarity">
    <text evidence="11">Belongs to the fatty acid desaturase type 1 family.</text>
</comment>
<organism>
    <name type="scientific">Acheta domesticus</name>
    <name type="common">House cricket</name>
    <dbReference type="NCBI Taxonomy" id="6997"/>
    <lineage>
        <taxon>Eukaryota</taxon>
        <taxon>Metazoa</taxon>
        <taxon>Ecdysozoa</taxon>
        <taxon>Arthropoda</taxon>
        <taxon>Hexapoda</taxon>
        <taxon>Insecta</taxon>
        <taxon>Pterygota</taxon>
        <taxon>Neoptera</taxon>
        <taxon>Polyneoptera</taxon>
        <taxon>Orthoptera</taxon>
        <taxon>Ensifera</taxon>
        <taxon>Gryllidea</taxon>
        <taxon>Grylloidea</taxon>
        <taxon>Gryllidae</taxon>
        <taxon>Gryllinae</taxon>
        <taxon>Acheta</taxon>
    </lineage>
</organism>
<evidence type="ECO:0000250" key="1">
    <source>
        <dbReference type="UniProtKB" id="O00767"/>
    </source>
</evidence>
<evidence type="ECO:0000250" key="2">
    <source>
        <dbReference type="UniProtKB" id="P13516"/>
    </source>
</evidence>
<evidence type="ECO:0000250" key="3">
    <source>
        <dbReference type="UniProtKB" id="Q6US81"/>
    </source>
</evidence>
<evidence type="ECO:0000255" key="4"/>
<evidence type="ECO:0000255" key="5">
    <source>
        <dbReference type="RuleBase" id="RU000581"/>
    </source>
</evidence>
<evidence type="ECO:0000269" key="6">
    <source>
    </source>
</evidence>
<evidence type="ECO:0000269" key="7">
    <source>
    </source>
</evidence>
<evidence type="ECO:0000269" key="8">
    <source>
    </source>
</evidence>
<evidence type="ECO:0000303" key="9">
    <source>
    </source>
</evidence>
<evidence type="ECO:0000303" key="10">
    <source>
    </source>
</evidence>
<evidence type="ECO:0000305" key="11"/>
<evidence type="ECO:0000305" key="12">
    <source>
    </source>
</evidence>
<evidence type="ECO:0000305" key="13">
    <source>
    </source>
</evidence>
<evidence type="ECO:0000305" key="14">
    <source>
    </source>
</evidence>
<evidence type="ECO:0000312" key="15">
    <source>
        <dbReference type="EMBL" id="AAK25796.1"/>
    </source>
</evidence>
<evidence type="ECO:0000312" key="16">
    <source>
        <dbReference type="EMBL" id="AAK25797.1"/>
    </source>
</evidence>
<name>FAD9_ACHDO</name>
<dbReference type="EC" id="1.14.19.1" evidence="6 7 8"/>
<dbReference type="EMBL" id="AF338465">
    <property type="protein sequence ID" value="AAK25796.1"/>
    <property type="molecule type" value="Transcribed_RNA"/>
</dbReference>
<dbReference type="EMBL" id="AF338466">
    <property type="protein sequence ID" value="AAK25797.1"/>
    <property type="molecule type" value="mRNA"/>
</dbReference>
<dbReference type="SMR" id="Q9BH41"/>
<dbReference type="SwissLipids" id="SLP:000000457"/>
<dbReference type="GO" id="GO:0005789">
    <property type="term" value="C:endoplasmic reticulum membrane"/>
    <property type="evidence" value="ECO:0007669"/>
    <property type="project" value="TreeGrafter"/>
</dbReference>
<dbReference type="GO" id="GO:0005506">
    <property type="term" value="F:iron ion binding"/>
    <property type="evidence" value="ECO:0007669"/>
    <property type="project" value="TreeGrafter"/>
</dbReference>
<dbReference type="GO" id="GO:0004768">
    <property type="term" value="F:stearoyl-CoA 9-desaturase activity"/>
    <property type="evidence" value="ECO:0007669"/>
    <property type="project" value="UniProtKB-EC"/>
</dbReference>
<dbReference type="GO" id="GO:0006636">
    <property type="term" value="P:unsaturated fatty acid biosynthetic process"/>
    <property type="evidence" value="ECO:0007669"/>
    <property type="project" value="TreeGrafter"/>
</dbReference>
<dbReference type="CDD" id="cd03505">
    <property type="entry name" value="Delta9-FADS-like"/>
    <property type="match status" value="1"/>
</dbReference>
<dbReference type="InterPro" id="IPR015876">
    <property type="entry name" value="Acyl-CoA_DS"/>
</dbReference>
<dbReference type="PANTHER" id="PTHR11351">
    <property type="entry name" value="ACYL-COA DESATURASE"/>
    <property type="match status" value="1"/>
</dbReference>
<dbReference type="PANTHER" id="PTHR11351:SF31">
    <property type="entry name" value="DESATURASE 1, ISOFORM A-RELATED"/>
    <property type="match status" value="1"/>
</dbReference>
<dbReference type="PRINTS" id="PR00075">
    <property type="entry name" value="FACDDSATRASE"/>
</dbReference>
<accession>Q9BH41</accession>